<name>HEMA_I64A6</name>
<proteinExistence type="inferred from homology"/>
<comment type="function">
    <text>Binds to sialic acid-containing receptors on the cell surface, bringing about the attachment of the virus particle to the cell. This attachment induces virion internalization of about two third of the virus particles through clathrin-dependent endocytosis and about one third through a clathrin- and caveolin-independent pathway. Plays a major role in the determination of host range restriction and virulence. Class I viral fusion protein. Responsible for penetration of the virus into the cell cytoplasm by mediating the fusion of the membrane of the endocytosed virus particle with the endosomal membrane. Low pH in endosomes induces an irreversible conformational change in HA2, releasing the fusion hydrophobic peptide. Several trimers are required to form a competent fusion pore.</text>
</comment>
<comment type="function">
    <text evidence="1">Binds to sialic acid-containing receptors on the cell surface, bringing about the attachment of the virus particle to the cell. This attachment induces virion internalization either through clathrin-dependent endocytosis or through clathrin- and caveolin-independent pathway. Plays a major role in the determination of host range restriction and virulence. Class I viral fusion protein. Responsible for penetration of the virus into the cell cytoplasm by mediating the fusion of the membrane of the endocytosed virus particle with the endosomal membrane. Low pH in endosomes induces an irreversible conformational change in HA2, releasing the fusion hydrophobic peptide. Several trimers are required to form a competent fusion pore.</text>
</comment>
<comment type="subunit">
    <text evidence="1">Homotrimer of disulfide-linked HA1-HA2.</text>
</comment>
<comment type="subcellular location">
    <subcellularLocation>
        <location evidence="1">Virion membrane</location>
        <topology evidence="1">Single-pass type I membrane protein</topology>
    </subcellularLocation>
    <subcellularLocation>
        <location evidence="1">Host apical cell membrane</location>
        <topology evidence="1">Single-pass type I membrane protein</topology>
    </subcellularLocation>
    <text evidence="1">Targeted to the apical plasma membrane in epithelial polarized cells through a signal present in the transmembrane domain. Associated with glycosphingolipid- and cholesterol-enriched detergent-resistant lipid rafts.</text>
</comment>
<comment type="PTM">
    <text evidence="1">Palmitoylated.</text>
</comment>
<comment type="PTM">
    <text evidence="1">In natural infection, inactive HA is matured into HA1 and HA2 outside the cell by one or more trypsin-like, arginine-specific endoprotease secreted by the bronchial epithelial cells. One identified protease that may be involved in this process is secreted in lungs by club cells.</text>
</comment>
<comment type="miscellaneous">
    <text>Major glycoprotein, comprises over 80% of the envelope proteins present in virus particle.</text>
</comment>
<comment type="miscellaneous">
    <text>The extent of infection into host organism is determined by HA. Influenza viruses bud from the apical surface of polarized epithelial cells (e.g. bronchial epithelial cells) into lumen of lungs and are therefore usually pneumotropic. The reason is that HA is cleaved by tryptase clara which is restricted to lungs. However, HAs of H5 and H7 pantropic avian viruses subtypes can be cleaved by furin and subtilisin-type enzymes, allowing the virus to grow in other organs than lungs.</text>
</comment>
<comment type="miscellaneous">
    <text evidence="2">The influenza A genome consist of 8 RNA segments. Genetic variation of hemagglutinin and/or neuraminidase genes results in the emergence of new influenza strains. The mechanism of variation can be the result of point mutations or the result of genetic reassortment between segments of two different strains.</text>
</comment>
<comment type="similarity">
    <text evidence="1">Belongs to the influenza viruses hemagglutinin family.</text>
</comment>
<evidence type="ECO:0000255" key="1">
    <source>
        <dbReference type="HAMAP-Rule" id="MF_04072"/>
    </source>
</evidence>
<evidence type="ECO:0000305" key="2"/>
<reference key="1">
    <citation type="journal article" date="1992" name="Virus Res.">
        <title>Sequence analysis of the equine H7 influenza virus haemagglutinin gene.</title>
        <authorList>
            <person name="Gibson C.A."/>
            <person name="Daniels R.S."/>
            <person name="Oxford J.S."/>
            <person name="McCauley J.W."/>
        </authorList>
    </citation>
    <scope>NUCLEOTIDE SEQUENCE [GENOMIC RNA]</scope>
</reference>
<protein>
    <recommendedName>
        <fullName evidence="1">Hemagglutinin</fullName>
    </recommendedName>
    <component>
        <recommendedName>
            <fullName evidence="1">Hemagglutinin HA1 chain</fullName>
        </recommendedName>
    </component>
    <component>
        <recommendedName>
            <fullName evidence="1">Hemagglutinin HA2 chain</fullName>
        </recommendedName>
    </component>
</protein>
<organismHost>
    <name type="scientific">Aves</name>
    <dbReference type="NCBI Taxonomy" id="8782"/>
</organismHost>
<organismHost>
    <name type="scientific">Equus caballus</name>
    <name type="common">Horse</name>
    <dbReference type="NCBI Taxonomy" id="9796"/>
</organismHost>
<organismHost>
    <name type="scientific">Homo sapiens</name>
    <name type="common">Human</name>
    <dbReference type="NCBI Taxonomy" id="9606"/>
</organismHost>
<organismHost>
    <name type="scientific">Phocidae</name>
    <name type="common">true seals</name>
    <dbReference type="NCBI Taxonomy" id="9709"/>
</organismHost>
<feature type="signal peptide" evidence="1">
    <location>
        <begin position="1"/>
        <end position="18"/>
    </location>
</feature>
<feature type="chain" id="PRO_0000440406" description="Hemagglutinin" evidence="1">
    <location>
        <begin position="19"/>
        <end position="570"/>
    </location>
</feature>
<feature type="chain" id="PRO_0000038974" description="Hemagglutinin HA1 chain" evidence="1">
    <location>
        <begin position="19"/>
        <end position="348"/>
    </location>
</feature>
<feature type="chain" id="PRO_0000038975" description="Hemagglutinin HA2 chain" evidence="1">
    <location>
        <begin position="350"/>
        <end position="570"/>
    </location>
</feature>
<feature type="topological domain" description="Extracellular" evidence="1">
    <location>
        <begin position="19"/>
        <end position="533"/>
    </location>
</feature>
<feature type="transmembrane region" description="Helical" evidence="1">
    <location>
        <begin position="534"/>
        <end position="554"/>
    </location>
</feature>
<feature type="topological domain" description="Cytoplasmic" evidence="1">
    <location>
        <begin position="555"/>
        <end position="570"/>
    </location>
</feature>
<feature type="site" description="Cleavage; by host" evidence="1">
    <location>
        <begin position="349"/>
        <end position="350"/>
    </location>
</feature>
<feature type="lipid moiety-binding region" description="S-palmitoyl cysteine; by host" evidence="1">
    <location>
        <position position="566"/>
    </location>
</feature>
<feature type="lipid moiety-binding region" description="S-palmitoyl cysteine; by host" evidence="1">
    <location>
        <position position="569"/>
    </location>
</feature>
<feature type="glycosylation site" description="N-linked (GlcNAc...) asparagine; by host" evidence="1">
    <location>
        <position position="30"/>
    </location>
</feature>
<feature type="glycosylation site" description="N-linked (GlcNAc...) asparagine; by host" evidence="1">
    <location>
        <position position="46"/>
    </location>
</feature>
<feature type="glycosylation site" description="N-linked (GlcNAc...) asparagine; by host" evidence="1">
    <location>
        <position position="249"/>
    </location>
</feature>
<feature type="glycosylation site" description="N-linked (GlcNAc...) asparagine; by host" evidence="1">
    <location>
        <position position="253"/>
    </location>
</feature>
<feature type="glycosylation site" description="N-linked (GlcNAc...) asparagine; by host" evidence="1">
    <location>
        <position position="335"/>
    </location>
</feature>
<feature type="glycosylation site" description="N-linked (GlcNAc...) asparagine; by host" evidence="1">
    <location>
        <position position="431"/>
    </location>
</feature>
<feature type="glycosylation site" description="N-linked (GlcNAc...) asparagine; by host" evidence="1">
    <location>
        <position position="503"/>
    </location>
</feature>
<feature type="disulfide bond" description="Interchain (between HA1 and HA2 chains)" evidence="1">
    <location>
        <begin position="22"/>
        <end position="486"/>
    </location>
</feature>
<feature type="disulfide bond" evidence="1">
    <location>
        <begin position="60"/>
        <end position="286"/>
    </location>
</feature>
<feature type="disulfide bond" evidence="1">
    <location>
        <begin position="72"/>
        <end position="84"/>
    </location>
</feature>
<feature type="disulfide bond" evidence="1">
    <location>
        <begin position="105"/>
        <end position="147"/>
    </location>
</feature>
<feature type="disulfide bond" evidence="1">
    <location>
        <begin position="290"/>
        <end position="314"/>
    </location>
</feature>
<feature type="disulfide bond" evidence="1">
    <location>
        <begin position="493"/>
        <end position="497"/>
    </location>
</feature>
<gene>
    <name evidence="1" type="primary">HA</name>
</gene>
<dbReference type="EMBL" id="X61627">
    <property type="protein sequence ID" value="CAA43815.1"/>
    <property type="molecule type" value="Genomic_RNA"/>
</dbReference>
<dbReference type="PIR" id="S22029">
    <property type="entry name" value="S22029"/>
</dbReference>
<dbReference type="SMR" id="P26097"/>
<dbReference type="GlyCosmos" id="P26097">
    <property type="glycosylation" value="7 sites, No reported glycans"/>
</dbReference>
<dbReference type="GO" id="GO:0020002">
    <property type="term" value="C:host cell plasma membrane"/>
    <property type="evidence" value="ECO:0007669"/>
    <property type="project" value="UniProtKB-SubCell"/>
</dbReference>
<dbReference type="GO" id="GO:0016020">
    <property type="term" value="C:membrane"/>
    <property type="evidence" value="ECO:0007669"/>
    <property type="project" value="UniProtKB-UniRule"/>
</dbReference>
<dbReference type="GO" id="GO:0019031">
    <property type="term" value="C:viral envelope"/>
    <property type="evidence" value="ECO:0007669"/>
    <property type="project" value="UniProtKB-UniRule"/>
</dbReference>
<dbReference type="GO" id="GO:0055036">
    <property type="term" value="C:virion membrane"/>
    <property type="evidence" value="ECO:0007669"/>
    <property type="project" value="UniProtKB-SubCell"/>
</dbReference>
<dbReference type="GO" id="GO:0046789">
    <property type="term" value="F:host cell surface receptor binding"/>
    <property type="evidence" value="ECO:0007669"/>
    <property type="project" value="UniProtKB-UniRule"/>
</dbReference>
<dbReference type="GO" id="GO:0075512">
    <property type="term" value="P:clathrin-dependent endocytosis of virus by host cell"/>
    <property type="evidence" value="ECO:0007669"/>
    <property type="project" value="UniProtKB-UniRule"/>
</dbReference>
<dbReference type="GO" id="GO:0039654">
    <property type="term" value="P:fusion of virus membrane with host endosome membrane"/>
    <property type="evidence" value="ECO:0007669"/>
    <property type="project" value="UniProtKB-UniRule"/>
</dbReference>
<dbReference type="GO" id="GO:0019064">
    <property type="term" value="P:fusion of virus membrane with host plasma membrane"/>
    <property type="evidence" value="ECO:0007669"/>
    <property type="project" value="InterPro"/>
</dbReference>
<dbReference type="GO" id="GO:0046761">
    <property type="term" value="P:viral budding from plasma membrane"/>
    <property type="evidence" value="ECO:0007669"/>
    <property type="project" value="UniProtKB-UniRule"/>
</dbReference>
<dbReference type="GO" id="GO:0019062">
    <property type="term" value="P:virion attachment to host cell"/>
    <property type="evidence" value="ECO:0007669"/>
    <property type="project" value="UniProtKB-KW"/>
</dbReference>
<dbReference type="Gene3D" id="3.90.20.10">
    <property type="match status" value="1"/>
</dbReference>
<dbReference type="Gene3D" id="3.90.209.20">
    <property type="match status" value="1"/>
</dbReference>
<dbReference type="HAMAP" id="MF_04072">
    <property type="entry name" value="INFV_HEMA"/>
    <property type="match status" value="1"/>
</dbReference>
<dbReference type="InterPro" id="IPR008980">
    <property type="entry name" value="Capsid_hemagglutn"/>
</dbReference>
<dbReference type="InterPro" id="IPR013828">
    <property type="entry name" value="Hemagglutn_HA1_a/b_dom_sf"/>
</dbReference>
<dbReference type="InterPro" id="IPR000149">
    <property type="entry name" value="Hemagglutn_influenz_A"/>
</dbReference>
<dbReference type="InterPro" id="IPR001364">
    <property type="entry name" value="Hemagglutn_influenz_A/B"/>
</dbReference>
<dbReference type="Pfam" id="PF00509">
    <property type="entry name" value="Hemagglutinin"/>
    <property type="match status" value="1"/>
</dbReference>
<dbReference type="PRINTS" id="PR00330">
    <property type="entry name" value="HEMAGGLUTN1"/>
</dbReference>
<dbReference type="PRINTS" id="PR00329">
    <property type="entry name" value="HEMAGGLUTN12"/>
</dbReference>
<dbReference type="SUPFAM" id="SSF58064">
    <property type="entry name" value="Influenza hemagglutinin (stalk)"/>
    <property type="match status" value="1"/>
</dbReference>
<dbReference type="SUPFAM" id="SSF49818">
    <property type="entry name" value="Viral protein domain"/>
    <property type="match status" value="1"/>
</dbReference>
<sequence length="570" mass="64226">MNTQILILATSAFLCVRADKICLGHHAASNGTKVDTLTEKGIEVVNATETVEQKNIPKICSKGKQTIDLGQCGLLGTIIGPPQCDQFLEFSANLIIERREGNDICYPGKFDDEETLRQILRKSGGIKKENMGFTYTGVRTNGETSACRRSRSSFYAEMKWLLSNTDNGVFPQMTKSYKNTKREPALIIWGIHHSGSTAEQTRLYGSGNKLITVWSSKYQQSFAPNPGPRPQINGQSGRIDFYWLMLDPNDTVNFSFNGAFIAPDRASFLRGKSLGIQSDAQLDNNCEGECYHIGGTIISNLPFQNINSRAIGKCPRYVKQKSLMLATGMKNVPENSTHKQLTHHMRKKRGLFGAIAGFIENGWEGLIDGWYGYRHQNAQGEGTAADYKSTQSAINQITGKLNRLIEKTNQQFELIDNEFNEIEKQIGNVINWTRDSIIEIWSYNAEFLVAVENQHTIDLTDSEMNKLYEKVRRQLRENAEEDGNGCFEIFHQCDNDCMASIRNNTYDHKKYRKEAIQNRIQIDAVKLSSGYKDVILWFSFGASCFLFLAITMGLAFICIKNGNMRCTICI</sequence>
<accession>P26097</accession>
<keyword id="KW-1167">Clathrin- and caveolin-independent endocytosis of virus by host</keyword>
<keyword id="KW-1165">Clathrin-mediated endocytosis of virus by host</keyword>
<keyword id="KW-1015">Disulfide bond</keyword>
<keyword id="KW-1170">Fusion of virus membrane with host endosomal membrane</keyword>
<keyword id="KW-1168">Fusion of virus membrane with host membrane</keyword>
<keyword id="KW-0325">Glycoprotein</keyword>
<keyword id="KW-0348">Hemagglutinin</keyword>
<keyword id="KW-1032">Host cell membrane</keyword>
<keyword id="KW-1043">Host membrane</keyword>
<keyword id="KW-0945">Host-virus interaction</keyword>
<keyword id="KW-0449">Lipoprotein</keyword>
<keyword id="KW-0472">Membrane</keyword>
<keyword id="KW-0564">Palmitate</keyword>
<keyword id="KW-0732">Signal</keyword>
<keyword id="KW-0812">Transmembrane</keyword>
<keyword id="KW-1133">Transmembrane helix</keyword>
<keyword id="KW-1161">Viral attachment to host cell</keyword>
<keyword id="KW-0261">Viral envelope protein</keyword>
<keyword id="KW-1162">Viral penetration into host cytoplasm</keyword>
<keyword id="KW-0946">Virion</keyword>
<keyword id="KW-1164">Virus endocytosis by host</keyword>
<keyword id="KW-1160">Virus entry into host cell</keyword>
<organism>
    <name type="scientific">Influenza A virus (strain A/Equine/Detroit/1/1964 H7N7)</name>
    <dbReference type="NCBI Taxonomy" id="217834"/>
    <lineage>
        <taxon>Viruses</taxon>
        <taxon>Riboviria</taxon>
        <taxon>Orthornavirae</taxon>
        <taxon>Negarnaviricota</taxon>
        <taxon>Polyploviricotina</taxon>
        <taxon>Insthoviricetes</taxon>
        <taxon>Articulavirales</taxon>
        <taxon>Orthomyxoviridae</taxon>
        <taxon>Alphainfluenzavirus</taxon>
        <taxon>Alphainfluenzavirus influenzae</taxon>
        <taxon>Influenza A virus</taxon>
    </lineage>
</organism>